<sequence length="25" mass="2613">GLLSVLGSVVKHVIPHVVPVIAEHL</sequence>
<evidence type="ECO:0000250" key="1"/>
<evidence type="ECO:0000250" key="2">
    <source>
        <dbReference type="UniProtKB" id="Q800R2"/>
    </source>
</evidence>
<evidence type="ECO:0000269" key="3">
    <source ref="1"/>
</evidence>
<evidence type="ECO:0000305" key="4"/>
<proteinExistence type="evidence at protein level"/>
<protein>
    <recommendedName>
        <fullName>Caerin-1.5</fullName>
    </recommendedName>
</protein>
<reference key="1">
    <citation type="journal article" date="1993" name="J. Chem. Res.">
        <title>Peptides from Australian frogs. The structures of the caerins from Litoria caerula.</title>
        <authorList>
            <person name="Stone D.J.M."/>
            <person name="Waugh R.J."/>
            <person name="Bowie J.H."/>
            <person name="Wallace J.C."/>
            <person name="Tyler M.J."/>
        </authorList>
    </citation>
    <scope>PROTEIN SEQUENCE</scope>
    <scope>MASS SPECTROMETRY</scope>
    <source>
        <tissue>Parotoid gland</tissue>
    </source>
</reference>
<accession>P56230</accession>
<dbReference type="SMR" id="P56230"/>
<dbReference type="GO" id="GO:0005576">
    <property type="term" value="C:extracellular region"/>
    <property type="evidence" value="ECO:0007669"/>
    <property type="project" value="UniProtKB-SubCell"/>
</dbReference>
<dbReference type="GO" id="GO:0042742">
    <property type="term" value="P:defense response to bacterium"/>
    <property type="evidence" value="ECO:0007669"/>
    <property type="project" value="UniProtKB-KW"/>
</dbReference>
<dbReference type="InterPro" id="IPR010000">
    <property type="entry name" value="Caerin_1"/>
</dbReference>
<dbReference type="Pfam" id="PF07440">
    <property type="entry name" value="Caerin_1"/>
    <property type="match status" value="1"/>
</dbReference>
<name>CR15_RANCA</name>
<organism>
    <name type="scientific">Ranoidea caerulea</name>
    <name type="common">Green tree frog</name>
    <name type="synonym">Litoria caerulea</name>
    <dbReference type="NCBI Taxonomy" id="30344"/>
    <lineage>
        <taxon>Eukaryota</taxon>
        <taxon>Metazoa</taxon>
        <taxon>Chordata</taxon>
        <taxon>Craniata</taxon>
        <taxon>Vertebrata</taxon>
        <taxon>Euteleostomi</taxon>
        <taxon>Amphibia</taxon>
        <taxon>Batrachia</taxon>
        <taxon>Anura</taxon>
        <taxon>Neobatrachia</taxon>
        <taxon>Hyloidea</taxon>
        <taxon>Hylidae</taxon>
        <taxon>Pelodryadinae</taxon>
        <taxon>Ranoidea</taxon>
    </lineage>
</organism>
<feature type="peptide" id="PRO_0000043738" description="Caerin-1.5">
    <location>
        <begin position="1"/>
        <end position="25"/>
    </location>
</feature>
<feature type="modified residue" description="Leucine amide" evidence="2">
    <location>
        <position position="25"/>
    </location>
</feature>
<keyword id="KW-0027">Amidation</keyword>
<keyword id="KW-0878">Amphibian defense peptide</keyword>
<keyword id="KW-0044">Antibiotic</keyword>
<keyword id="KW-0929">Antimicrobial</keyword>
<keyword id="KW-0903">Direct protein sequencing</keyword>
<keyword id="KW-0964">Secreted</keyword>
<comment type="function">
    <text>Antibacterial peptide, that adopts an alpha helical conformation which can disrupt bacterial membranes. Each caerin displays a different antimicrobial specificity.</text>
</comment>
<comment type="subcellular location">
    <subcellularLocation>
        <location>Secreted</location>
    </subcellularLocation>
</comment>
<comment type="tissue specificity">
    <text>Expressed by the skin parotoid and/or rostral glands.</text>
</comment>
<comment type="domain">
    <text evidence="1">Contains two amphipathic alpha helix regions separated by a region of less-defined helicity and greater flexibility.</text>
</comment>
<comment type="mass spectrometry" mass="2610.0" method="FAB" evidence="3"/>
<comment type="similarity">
    <text evidence="4">Belongs to the frog skin active peptide (FSAP) family. Caerin subfamily.</text>
</comment>